<keyword id="KW-0274">FAD</keyword>
<keyword id="KW-0285">Flavoprotein</keyword>
<keyword id="KW-0472">Membrane</keyword>
<keyword id="KW-0496">Mitochondrion</keyword>
<keyword id="KW-1000">Mitochondrion outer membrane</keyword>
<keyword id="KW-0520">NAD</keyword>
<keyword id="KW-0560">Oxidoreductase</keyword>
<keyword id="KW-1185">Reference proteome</keyword>
<keyword id="KW-0808">Transferase</keyword>
<keyword id="KW-0812">Transmembrane</keyword>
<keyword id="KW-1133">Transmembrane helix</keyword>
<accession>A6R2K7</accession>
<reference key="1">
    <citation type="journal article" date="2009" name="Genome Res.">
        <title>Comparative genomic analyses of the human fungal pathogens Coccidioides and their relatives.</title>
        <authorList>
            <person name="Sharpton T.J."/>
            <person name="Stajich J.E."/>
            <person name="Rounsley S.D."/>
            <person name="Gardner M.J."/>
            <person name="Wortman J.R."/>
            <person name="Jordar V.S."/>
            <person name="Maiti R."/>
            <person name="Kodira C.D."/>
            <person name="Neafsey D.E."/>
            <person name="Zeng Q."/>
            <person name="Hung C.-Y."/>
            <person name="McMahan C."/>
            <person name="Muszewska A."/>
            <person name="Grynberg M."/>
            <person name="Mandel M.A."/>
            <person name="Kellner E.M."/>
            <person name="Barker B.M."/>
            <person name="Galgiani J.N."/>
            <person name="Orbach M.J."/>
            <person name="Kirkland T.N."/>
            <person name="Cole G.T."/>
            <person name="Henn M.R."/>
            <person name="Birren B.W."/>
            <person name="Taylor J.W."/>
        </authorList>
    </citation>
    <scope>NUCLEOTIDE SEQUENCE [LARGE SCALE GENOMIC DNA]</scope>
    <source>
        <strain>NAm1 / WU24</strain>
    </source>
</reference>
<organism>
    <name type="scientific">Ajellomyces capsulatus (strain NAm1 / WU24)</name>
    <name type="common">Darling's disease fungus</name>
    <name type="synonym">Histoplasma capsulatum</name>
    <dbReference type="NCBI Taxonomy" id="2059318"/>
    <lineage>
        <taxon>Eukaryota</taxon>
        <taxon>Fungi</taxon>
        <taxon>Dikarya</taxon>
        <taxon>Ascomycota</taxon>
        <taxon>Pezizomycotina</taxon>
        <taxon>Eurotiomycetes</taxon>
        <taxon>Eurotiomycetidae</taxon>
        <taxon>Onygenales</taxon>
        <taxon>Ajellomycetaceae</taxon>
        <taxon>Histoplasma</taxon>
    </lineage>
</organism>
<gene>
    <name type="primary">CBR1</name>
    <name type="ORF">HCAG_03865</name>
</gene>
<protein>
    <recommendedName>
        <fullName>NADH-cytochrome b5 reductase 1</fullName>
        <ecNumber evidence="2">1.6.2.2</ecNumber>
    </recommendedName>
    <alternativeName>
        <fullName>Microsomal cytochrome b reductase</fullName>
    </alternativeName>
</protein>
<feature type="chain" id="PRO_0000330142" description="NADH-cytochrome b5 reductase 1">
    <location>
        <begin position="1"/>
        <end position="310"/>
    </location>
</feature>
<feature type="transmembrane region" description="Helical" evidence="3">
    <location>
        <begin position="32"/>
        <end position="52"/>
    </location>
</feature>
<feature type="domain" description="FAD-binding FR-type" evidence="4">
    <location>
        <begin position="61"/>
        <end position="166"/>
    </location>
</feature>
<feature type="binding site" evidence="1">
    <location>
        <begin position="146"/>
        <end position="161"/>
    </location>
    <ligand>
        <name>FAD</name>
        <dbReference type="ChEBI" id="CHEBI:57692"/>
    </ligand>
</feature>
<feature type="binding site" evidence="1">
    <location>
        <begin position="172"/>
        <end position="209"/>
    </location>
    <ligand>
        <name>FAD</name>
        <dbReference type="ChEBI" id="CHEBI:57692"/>
    </ligand>
</feature>
<sequence length="310" mass="33830">MAMFSWTSSEAINGMYIPSALLIFGTAIVKKEWLPYAVALAAILSGGKVFSNRQRKVLNPTEFQNFELKEKTIVSHNVAIYRFALPRPTDILGLPIGQHISLAATIEGQTKEIMRSYTPISSDQEAGYFDLLVKAYPQGNISKHLAGLRIGQTMKVRGPKGAMVYTPNMVKKIGMIAGGTGITPMLQIIKAIIRGRPRNGGNDTTQVDLIFANVNPDDILLKDELDQLAKEDDGFRVFYVLNNPPEGWEGGVGFVTPDMIRAKLPAAAPDTKVLICGPPPMVSAMKKATESLGFKKAGLVSKLEDQVFCF</sequence>
<proteinExistence type="inferred from homology"/>
<evidence type="ECO:0000250" key="1"/>
<evidence type="ECO:0000250" key="2">
    <source>
        <dbReference type="UniProtKB" id="P38626"/>
    </source>
</evidence>
<evidence type="ECO:0000255" key="3"/>
<evidence type="ECO:0000255" key="4">
    <source>
        <dbReference type="PROSITE-ProRule" id="PRU00716"/>
    </source>
</evidence>
<evidence type="ECO:0000305" key="5"/>
<comment type="function">
    <text evidence="2">NADH-dependent reductase for DPH3 and cytochrome b5. Required for the first step of diphthamide biosynthesis, a post-translational modification of histidine which occurs in elongation factor 2. DPH1 and DPH2 transfer a 3-amino-3-carboxypropyl (ACP) group from S-adenosyl-L-methionine (SAM) to a histidine residue, the reaction is assisted by a reduction system comprising DPH3 and a NADH-dependent reductase, predominantly CBR1. By reducing DPH3, also involved in the formation of the tRNA wobble base modification mcm5s 2U (5-methoxycarbonylmethyl-2-thiouridine), mediated by the elongator complex. The cytochrome b5/NADH cytochrome b5 reductase electron transfer system supports the catalytic activity of several sterol biosynthetic enzymes.</text>
</comment>
<comment type="catalytic activity">
    <reaction evidence="2">
        <text>2 Fe(III)-[cytochrome b5] + NADH = 2 Fe(II)-[cytochrome b5] + NAD(+) + H(+)</text>
        <dbReference type="Rhea" id="RHEA:46680"/>
        <dbReference type="Rhea" id="RHEA-COMP:10438"/>
        <dbReference type="Rhea" id="RHEA-COMP:10439"/>
        <dbReference type="ChEBI" id="CHEBI:15378"/>
        <dbReference type="ChEBI" id="CHEBI:29033"/>
        <dbReference type="ChEBI" id="CHEBI:29034"/>
        <dbReference type="ChEBI" id="CHEBI:57540"/>
        <dbReference type="ChEBI" id="CHEBI:57945"/>
        <dbReference type="EC" id="1.6.2.2"/>
    </reaction>
</comment>
<comment type="catalytic activity">
    <reaction evidence="2">
        <text>2 Fe(3+)-[Dph3] + NADH = 2 Fe(2+)-[Dph3] + NAD(+) + H(+)</text>
        <dbReference type="Rhea" id="RHEA:71231"/>
        <dbReference type="Rhea" id="RHEA-COMP:18002"/>
        <dbReference type="Rhea" id="RHEA-COMP:18003"/>
        <dbReference type="ChEBI" id="CHEBI:15378"/>
        <dbReference type="ChEBI" id="CHEBI:29033"/>
        <dbReference type="ChEBI" id="CHEBI:29034"/>
        <dbReference type="ChEBI" id="CHEBI:57540"/>
        <dbReference type="ChEBI" id="CHEBI:57945"/>
        <dbReference type="ChEBI" id="CHEBI:83228"/>
    </reaction>
    <physiologicalReaction direction="left-to-right" evidence="2">
        <dbReference type="Rhea" id="RHEA:71232"/>
    </physiologicalReaction>
</comment>
<comment type="cofactor">
    <cofactor evidence="3">
        <name>FAD</name>
        <dbReference type="ChEBI" id="CHEBI:57692"/>
    </cofactor>
</comment>
<comment type="pathway">
    <text evidence="2">Protein modification; peptidyl-diphthamide biosynthesis.</text>
</comment>
<comment type="subunit">
    <text evidence="2">Monomer. Component of the 2-(3-amino-3-carboxypropyl)histidine synthase complex composed of DPH1, DPH2, DPH3 and a NADH-dependent reductase, predominantly CBR1.</text>
</comment>
<comment type="subcellular location">
    <subcellularLocation>
        <location evidence="2">Mitochondrion outer membrane</location>
        <topology evidence="3">Single-pass membrane protein</topology>
    </subcellularLocation>
</comment>
<comment type="similarity">
    <text evidence="5">Belongs to the flavoprotein pyridine nucleotide cytochrome reductase family.</text>
</comment>
<dbReference type="EC" id="1.6.2.2" evidence="2"/>
<dbReference type="EMBL" id="CH476657">
    <property type="protein sequence ID" value="EDN07334.1"/>
    <property type="molecule type" value="Genomic_DNA"/>
</dbReference>
<dbReference type="SMR" id="A6R2K7"/>
<dbReference type="STRING" id="339724.A6R2K7"/>
<dbReference type="KEGG" id="aje:HCAG_03865"/>
<dbReference type="VEuPathDB" id="FungiDB:HCAG_03865"/>
<dbReference type="HOGENOM" id="CLU_003827_9_0_1"/>
<dbReference type="OMA" id="VQIFMCG"/>
<dbReference type="OrthoDB" id="1332at299071"/>
<dbReference type="UniPathway" id="UPA00559"/>
<dbReference type="Proteomes" id="UP000009297">
    <property type="component" value="Unassembled WGS sequence"/>
</dbReference>
<dbReference type="GO" id="GO:0005783">
    <property type="term" value="C:endoplasmic reticulum"/>
    <property type="evidence" value="ECO:0007669"/>
    <property type="project" value="TreeGrafter"/>
</dbReference>
<dbReference type="GO" id="GO:0005741">
    <property type="term" value="C:mitochondrial outer membrane"/>
    <property type="evidence" value="ECO:0007669"/>
    <property type="project" value="UniProtKB-SubCell"/>
</dbReference>
<dbReference type="GO" id="GO:0004128">
    <property type="term" value="F:cytochrome-b5 reductase activity, acting on NAD(P)H"/>
    <property type="evidence" value="ECO:0000250"/>
    <property type="project" value="UniProtKB"/>
</dbReference>
<dbReference type="GO" id="GO:0003954">
    <property type="term" value="F:NADH dehydrogenase activity"/>
    <property type="evidence" value="ECO:0000250"/>
    <property type="project" value="UniProtKB"/>
</dbReference>
<dbReference type="GO" id="GO:0016740">
    <property type="term" value="F:transferase activity"/>
    <property type="evidence" value="ECO:0007669"/>
    <property type="project" value="UniProtKB-KW"/>
</dbReference>
<dbReference type="GO" id="GO:0017183">
    <property type="term" value="P:protein histidyl modification to diphthamide"/>
    <property type="evidence" value="ECO:0000250"/>
    <property type="project" value="UniProtKB"/>
</dbReference>
<dbReference type="GO" id="GO:0002926">
    <property type="term" value="P:tRNA wobble base 5-methoxycarbonylmethyl-2-thiouridinylation"/>
    <property type="evidence" value="ECO:0000250"/>
    <property type="project" value="UniProtKB"/>
</dbReference>
<dbReference type="CDD" id="cd06183">
    <property type="entry name" value="cyt_b5_reduct_like"/>
    <property type="match status" value="1"/>
</dbReference>
<dbReference type="FunFam" id="2.40.30.10:FF:000032">
    <property type="entry name" value="NADH-cytochrome b5 reductase"/>
    <property type="match status" value="1"/>
</dbReference>
<dbReference type="FunFam" id="3.40.50.80:FF:000019">
    <property type="entry name" value="NADH-cytochrome b5 reductase"/>
    <property type="match status" value="1"/>
</dbReference>
<dbReference type="Gene3D" id="3.40.50.80">
    <property type="entry name" value="Nucleotide-binding domain of ferredoxin-NADP reductase (FNR) module"/>
    <property type="match status" value="1"/>
</dbReference>
<dbReference type="Gene3D" id="2.40.30.10">
    <property type="entry name" value="Translation factors"/>
    <property type="match status" value="1"/>
</dbReference>
<dbReference type="InterPro" id="IPR001834">
    <property type="entry name" value="CBR-like"/>
</dbReference>
<dbReference type="InterPro" id="IPR008333">
    <property type="entry name" value="Cbr1-like_FAD-bd_dom"/>
</dbReference>
<dbReference type="InterPro" id="IPR017927">
    <property type="entry name" value="FAD-bd_FR_type"/>
</dbReference>
<dbReference type="InterPro" id="IPR001709">
    <property type="entry name" value="Flavoprot_Pyr_Nucl_cyt_Rdtase"/>
</dbReference>
<dbReference type="InterPro" id="IPR039261">
    <property type="entry name" value="FNR_nucleotide-bd"/>
</dbReference>
<dbReference type="InterPro" id="IPR001433">
    <property type="entry name" value="OxRdtase_FAD/NAD-bd"/>
</dbReference>
<dbReference type="InterPro" id="IPR017938">
    <property type="entry name" value="Riboflavin_synthase-like_b-brl"/>
</dbReference>
<dbReference type="PANTHER" id="PTHR19370">
    <property type="entry name" value="NADH-CYTOCHROME B5 REDUCTASE"/>
    <property type="match status" value="1"/>
</dbReference>
<dbReference type="PANTHER" id="PTHR19370:SF184">
    <property type="entry name" value="NADH-CYTOCHROME B5 REDUCTASE-LIKE"/>
    <property type="match status" value="1"/>
</dbReference>
<dbReference type="Pfam" id="PF00970">
    <property type="entry name" value="FAD_binding_6"/>
    <property type="match status" value="1"/>
</dbReference>
<dbReference type="Pfam" id="PF00175">
    <property type="entry name" value="NAD_binding_1"/>
    <property type="match status" value="1"/>
</dbReference>
<dbReference type="PRINTS" id="PR00406">
    <property type="entry name" value="CYTB5RDTASE"/>
</dbReference>
<dbReference type="PRINTS" id="PR00371">
    <property type="entry name" value="FPNCR"/>
</dbReference>
<dbReference type="SUPFAM" id="SSF52343">
    <property type="entry name" value="Ferredoxin reductase-like, C-terminal NADP-linked domain"/>
    <property type="match status" value="1"/>
</dbReference>
<dbReference type="SUPFAM" id="SSF63380">
    <property type="entry name" value="Riboflavin synthase domain-like"/>
    <property type="match status" value="1"/>
</dbReference>
<dbReference type="PROSITE" id="PS51384">
    <property type="entry name" value="FAD_FR"/>
    <property type="match status" value="1"/>
</dbReference>
<name>NCB5R_AJECN</name>